<accession>O64973</accession>
<accession>O81402</accession>
<accession>O82098</accession>
<accession>O82100</accession>
<gene>
    <name type="primary">RPS5</name>
    <name type="ordered locus">At1g12220</name>
    <name type="ORF">T28K15.5</name>
</gene>
<proteinExistence type="evidence at protein level"/>
<feature type="initiator methionine" description="Removed">
    <location>
        <position position="1"/>
    </location>
</feature>
<feature type="chain" id="PRO_0000212730" description="Disease resistance protein RPS5">
    <location>
        <begin position="2"/>
        <end position="889"/>
    </location>
</feature>
<feature type="domain" description="NB-ARC">
    <location>
        <begin position="140"/>
        <end position="444"/>
    </location>
</feature>
<feature type="repeat" description="LRR 1">
    <location>
        <begin position="518"/>
        <end position="539"/>
    </location>
</feature>
<feature type="repeat" description="LRR 2">
    <location>
        <begin position="540"/>
        <end position="561"/>
    </location>
</feature>
<feature type="repeat" description="LRR 3">
    <location>
        <begin position="564"/>
        <end position="586"/>
    </location>
</feature>
<feature type="repeat" description="LRR 4">
    <location>
        <begin position="588"/>
        <end position="610"/>
    </location>
</feature>
<feature type="repeat" description="LRR 5">
    <location>
        <begin position="611"/>
        <end position="633"/>
    </location>
</feature>
<feature type="repeat" description="LRR 6">
    <location>
        <begin position="634"/>
        <end position="656"/>
    </location>
</feature>
<feature type="coiled-coil region" evidence="2">
    <location>
        <begin position="29"/>
        <end position="58"/>
    </location>
</feature>
<feature type="binding site" evidence="2">
    <location>
        <begin position="183"/>
        <end position="190"/>
    </location>
    <ligand>
        <name>ATP</name>
        <dbReference type="ChEBI" id="CHEBI:30616"/>
    </ligand>
</feature>
<feature type="lipid moiety-binding region" description="N-myristoyl glycine" evidence="2 9">
    <location>
        <position position="2"/>
    </location>
</feature>
<feature type="lipid moiety-binding region" description="S-palmitoyl cysteine" evidence="9">
    <location>
        <position position="4"/>
    </location>
</feature>
<feature type="mutagenesis site" description="Affects plasma membrane location. Reduces RPS5-mediated plant resistance to P.syringae. Abolishes RPS5-mediated plant resistance to P.syringae; when associated with A-4." evidence="6">
    <original>GG</original>
    <variation>AA</variation>
    <location>
        <begin position="2"/>
        <end position="3"/>
    </location>
</feature>
<feature type="mutagenesis site" description="Affects plasma membrane location." evidence="5">
    <original>G</original>
    <variation>A</variation>
    <location>
        <position position="2"/>
    </location>
</feature>
<feature type="mutagenesis site" description="Slightly affects plasma membrane location. Abolishes RPS5-mediated plant resistance to P.syringae; when associated with 2-AA-3." evidence="5 6">
    <original>C</original>
    <variation>A</variation>
    <location>
        <position position="4"/>
    </location>
</feature>
<feature type="mutagenesis site" description="Affects plasma membrane location." evidence="5">
    <original>S</original>
    <variation>A</variation>
    <location>
        <position position="6"/>
    </location>
</feature>
<feature type="mutagenesis site" description="Abolishes RPS5-mediated plant resistance to P.syringae." evidence="4">
    <original>K</original>
    <variation>N</variation>
    <location>
        <position position="189"/>
    </location>
</feature>
<feature type="mutagenesis site" description="Induces RPS5-mediated plant resistance to P.syringae." evidence="4">
    <original>D</original>
    <variation>E</variation>
    <location>
        <position position="266"/>
    </location>
</feature>
<feature type="mutagenesis site" description="In rps5-1; impairs defense reaction against pathogens.">
    <original>E</original>
    <variation>K</variation>
    <location>
        <position position="572"/>
    </location>
</feature>
<feature type="mutagenesis site" description="In rps5-1; impairs defense reaction against pathogens.">
    <original>P</original>
    <variation>S</variation>
    <location>
        <position position="799"/>
    </location>
</feature>
<feature type="sequence conflict" description="In Ref. 6; AAC14555." evidence="10" ref="6">
    <original>TKI</original>
    <variation>RRS</variation>
    <location>
        <begin position="194"/>
        <end position="196"/>
    </location>
</feature>
<feature type="sequence conflict" description="In Ref. 6; AAC14555." evidence="10" ref="6">
    <original>RF</original>
    <variation>SI</variation>
    <location>
        <begin position="206"/>
        <end position="207"/>
    </location>
</feature>
<feature type="sequence conflict" description="In Ref. 5; AAC19138." evidence="10" ref="5">
    <original>V</original>
    <variation>A</variation>
    <location>
        <position position="214"/>
    </location>
</feature>
<feature type="sequence conflict" description="In Ref. 6; AAC14555." evidence="10" ref="6">
    <original>S</original>
    <variation>P</variation>
    <location>
        <position position="216"/>
    </location>
</feature>
<feature type="sequence conflict" description="In Ref. 5; AAC50027." evidence="10" ref="5">
    <original>S</original>
    <variation>G</variation>
    <location>
        <position position="240"/>
    </location>
</feature>
<feature type="sequence conflict" description="In Ref. 5; AAC50027." evidence="10" ref="5">
    <original>A</original>
    <variation>T</variation>
    <location>
        <position position="248"/>
    </location>
</feature>
<feature type="sequence conflict" description="In Ref. 6; AAC14555." evidence="10" ref="6">
    <original>L</original>
    <variation>S</variation>
    <location>
        <position position="263"/>
    </location>
</feature>
<feature type="sequence conflict" description="In Ref. 5; AAC19138." evidence="10" ref="5">
    <original>A</original>
    <variation>V</variation>
    <location>
        <position position="275"/>
    </location>
</feature>
<feature type="sequence conflict" description="In Ref. 5; AAC50027." evidence="10" ref="5">
    <original>H</original>
    <variation>P</variation>
    <location>
        <position position="334"/>
    </location>
</feature>
<feature type="sequence conflict" description="In Ref. 5; AAC19138." evidence="10" ref="5">
    <original>D</original>
    <variation>A</variation>
    <location>
        <position position="336"/>
    </location>
</feature>
<comment type="function">
    <text evidence="3 4 7 8">Disease resistance (R) protein that specifically recognizes the avrPphB type III effector avirulence protein from Pseudomonas syringae. Also confers resistance against Hyaloperonospora parasitica (downy mildew). Resistance proteins guard the plant against pathogens that contain an appropriate avirulence protein via an indirect interaction with this avirulence protein. That triggers a defense system including the hypersensitive response, which restricts the pathogen growth. Requires PBS1 to trigger the defense reaction against avrPphB. In case of infection by Pseudomonas syringae, AvrPphB triggers RPS5-mediated defense mechanism via the cleavage of PBS1, suggesting that the cleavage of PBS1 could trigger an exchange of ADP for ATP, thereby activating RPS5. May function as a fine-tuned sensor of alterations in the structure of the effector target PBS1.</text>
</comment>
<comment type="subunit">
    <text evidence="4 7">In uninfected plants, interacts with PBS1 through the coiled coil domain. Homodimer.</text>
</comment>
<comment type="interaction">
    <interactant intactId="EBI-15620767">
        <id>O64973</id>
    </interactant>
    <interactant intactId="EBI-2357898">
        <id>Q9FE20</id>
        <label>PBS1</label>
    </interactant>
    <organismsDiffer>false</organismsDiffer>
    <experiments>2</experiments>
</comment>
<comment type="interaction">
    <interactant intactId="EBI-15620767">
        <id>O64973</id>
    </interactant>
    <interactant intactId="EBI-15620767">
        <id>O64973</id>
        <label>RPS5</label>
    </interactant>
    <organismsDiffer>false</organismsDiffer>
    <experiments>6</experiments>
</comment>
<comment type="subcellular location">
    <subcellularLocation>
        <location>Cell membrane</location>
        <topology evidence="5 6">Lipid-anchor</topology>
    </subcellularLocation>
</comment>
<comment type="domain">
    <text evidence="1">The LRR repeats probably act as specificity determinant of pathogen recognition.</text>
</comment>
<comment type="miscellaneous">
    <text>RPS5 is absent in cv. Landsberg erecta.</text>
</comment>
<comment type="similarity">
    <text evidence="10">Belongs to the disease resistance NB-LRR family.</text>
</comment>
<comment type="online information" name="NIB-LRRS">
    <link uri="http://niblrrs.ucdavis.edu"/>
    <text>Functional and comparative genomics of disease resistance gene homologs</text>
</comment>
<dbReference type="EMBL" id="AF074916">
    <property type="protein sequence ID" value="AAC26126.1"/>
    <property type="molecule type" value="Genomic_DNA"/>
</dbReference>
<dbReference type="EMBL" id="AC022522">
    <property type="protein sequence ID" value="AAG12572.1"/>
    <property type="molecule type" value="Genomic_DNA"/>
</dbReference>
<dbReference type="EMBL" id="CP002684">
    <property type="protein sequence ID" value="AEE28851.1"/>
    <property type="molecule type" value="Genomic_DNA"/>
</dbReference>
<dbReference type="EMBL" id="CP002684">
    <property type="protein sequence ID" value="AEE28852.1"/>
    <property type="molecule type" value="Genomic_DNA"/>
</dbReference>
<dbReference type="EMBL" id="BT010583">
    <property type="protein sequence ID" value="AAQ82844.1"/>
    <property type="molecule type" value="mRNA"/>
</dbReference>
<dbReference type="EMBL" id="U97219">
    <property type="protein sequence ID" value="AAC50027.1"/>
    <property type="molecule type" value="Genomic_DNA"/>
</dbReference>
<dbReference type="EMBL" id="U97221">
    <property type="protein sequence ID" value="AAC19138.1"/>
    <property type="molecule type" value="Genomic_DNA"/>
</dbReference>
<dbReference type="EMBL" id="AF039379">
    <property type="protein sequence ID" value="AAC14555.1"/>
    <property type="molecule type" value="Genomic_DNA"/>
</dbReference>
<dbReference type="PIR" id="C86257">
    <property type="entry name" value="C86257"/>
</dbReference>
<dbReference type="RefSeq" id="NP_001184970.1">
    <property type="nucleotide sequence ID" value="NM_001198041.2"/>
</dbReference>
<dbReference type="RefSeq" id="NP_172686.1">
    <property type="nucleotide sequence ID" value="NM_101094.3"/>
</dbReference>
<dbReference type="SMR" id="O64973"/>
<dbReference type="BioGRID" id="23015">
    <property type="interactions" value="3"/>
</dbReference>
<dbReference type="DIP" id="DIP-60862N"/>
<dbReference type="FunCoup" id="O64973">
    <property type="interactions" value="273"/>
</dbReference>
<dbReference type="IntAct" id="O64973">
    <property type="interactions" value="2"/>
</dbReference>
<dbReference type="STRING" id="3702.O64973"/>
<dbReference type="iPTMnet" id="O64973"/>
<dbReference type="PaxDb" id="3702-AT1G12220.2"/>
<dbReference type="ProteomicsDB" id="228024"/>
<dbReference type="EnsemblPlants" id="AT1G12220.1">
    <property type="protein sequence ID" value="AT1G12220.1"/>
    <property type="gene ID" value="AT1G12220"/>
</dbReference>
<dbReference type="EnsemblPlants" id="AT1G12220.2">
    <property type="protein sequence ID" value="AT1G12220.2"/>
    <property type="gene ID" value="AT1G12220"/>
</dbReference>
<dbReference type="GeneID" id="837775"/>
<dbReference type="Gramene" id="AT1G12220.1">
    <property type="protein sequence ID" value="AT1G12220.1"/>
    <property type="gene ID" value="AT1G12220"/>
</dbReference>
<dbReference type="Gramene" id="AT1G12220.2">
    <property type="protein sequence ID" value="AT1G12220.2"/>
    <property type="gene ID" value="AT1G12220"/>
</dbReference>
<dbReference type="KEGG" id="ath:AT1G12220"/>
<dbReference type="Araport" id="AT1G12220"/>
<dbReference type="TAIR" id="AT1G12220">
    <property type="gene designation" value="RPS5"/>
</dbReference>
<dbReference type="eggNOG" id="KOG4658">
    <property type="taxonomic scope" value="Eukaryota"/>
</dbReference>
<dbReference type="HOGENOM" id="CLU_000427_4_0_1"/>
<dbReference type="InParanoid" id="O64973"/>
<dbReference type="PhylomeDB" id="O64973"/>
<dbReference type="PRO" id="PR:O64973"/>
<dbReference type="Proteomes" id="UP000006548">
    <property type="component" value="Chromosome 1"/>
</dbReference>
<dbReference type="ExpressionAtlas" id="O64973">
    <property type="expression patterns" value="baseline and differential"/>
</dbReference>
<dbReference type="GO" id="GO:0005886">
    <property type="term" value="C:plasma membrane"/>
    <property type="evidence" value="ECO:0000314"/>
    <property type="project" value="TAIR"/>
</dbReference>
<dbReference type="GO" id="GO:0043531">
    <property type="term" value="F:ADP binding"/>
    <property type="evidence" value="ECO:0007669"/>
    <property type="project" value="InterPro"/>
</dbReference>
<dbReference type="GO" id="GO:0005524">
    <property type="term" value="F:ATP binding"/>
    <property type="evidence" value="ECO:0007669"/>
    <property type="project" value="UniProtKB-KW"/>
</dbReference>
<dbReference type="GO" id="GO:0042802">
    <property type="term" value="F:identical protein binding"/>
    <property type="evidence" value="ECO:0000353"/>
    <property type="project" value="IntAct"/>
</dbReference>
<dbReference type="GO" id="GO:0000166">
    <property type="term" value="F:nucleotide binding"/>
    <property type="evidence" value="ECO:0000315"/>
    <property type="project" value="TAIR"/>
</dbReference>
<dbReference type="GO" id="GO:0038023">
    <property type="term" value="F:signaling receptor activity"/>
    <property type="evidence" value="ECO:0000315"/>
    <property type="project" value="TAIR"/>
</dbReference>
<dbReference type="GO" id="GO:0008219">
    <property type="term" value="P:cell death"/>
    <property type="evidence" value="ECO:0000315"/>
    <property type="project" value="TAIR"/>
</dbReference>
<dbReference type="GO" id="GO:0006952">
    <property type="term" value="P:defense response"/>
    <property type="evidence" value="ECO:0000315"/>
    <property type="project" value="TAIR"/>
</dbReference>
<dbReference type="GO" id="GO:0042742">
    <property type="term" value="P:defense response to bacterium"/>
    <property type="evidence" value="ECO:0000314"/>
    <property type="project" value="TAIR"/>
</dbReference>
<dbReference type="GO" id="GO:0009626">
    <property type="term" value="P:plant-type hypersensitive response"/>
    <property type="evidence" value="ECO:0000315"/>
    <property type="project" value="TAIR"/>
</dbReference>
<dbReference type="FunFam" id="3.40.50.300:FF:001091">
    <property type="entry name" value="Probable disease resistance protein At1g61300"/>
    <property type="match status" value="1"/>
</dbReference>
<dbReference type="FunFam" id="1.10.10.10:FF:000322">
    <property type="entry name" value="Probable disease resistance protein At1g63360"/>
    <property type="match status" value="1"/>
</dbReference>
<dbReference type="FunFam" id="3.80.10.10:FF:000799">
    <property type="entry name" value="Probable disease resistance protein At5g63020"/>
    <property type="match status" value="1"/>
</dbReference>
<dbReference type="FunFam" id="1.10.8.430:FF:000003">
    <property type="entry name" value="Probable disease resistance protein At5g66910"/>
    <property type="match status" value="1"/>
</dbReference>
<dbReference type="Gene3D" id="1.10.8.430">
    <property type="entry name" value="Helical domain of apoptotic protease-activating factors"/>
    <property type="match status" value="1"/>
</dbReference>
<dbReference type="Gene3D" id="3.40.50.300">
    <property type="entry name" value="P-loop containing nucleotide triphosphate hydrolases"/>
    <property type="match status" value="1"/>
</dbReference>
<dbReference type="Gene3D" id="3.80.10.10">
    <property type="entry name" value="Ribonuclease Inhibitor"/>
    <property type="match status" value="2"/>
</dbReference>
<dbReference type="Gene3D" id="1.10.10.10">
    <property type="entry name" value="Winged helix-like DNA-binding domain superfamily/Winged helix DNA-binding domain"/>
    <property type="match status" value="1"/>
</dbReference>
<dbReference type="InterPro" id="IPR042197">
    <property type="entry name" value="Apaf_helical"/>
</dbReference>
<dbReference type="InterPro" id="IPR032675">
    <property type="entry name" value="LRR_dom_sf"/>
</dbReference>
<dbReference type="InterPro" id="IPR055414">
    <property type="entry name" value="LRR_R13L4/SHOC2-like"/>
</dbReference>
<dbReference type="InterPro" id="IPR002182">
    <property type="entry name" value="NB-ARC"/>
</dbReference>
<dbReference type="InterPro" id="IPR027417">
    <property type="entry name" value="P-loop_NTPase"/>
</dbReference>
<dbReference type="InterPro" id="IPR050905">
    <property type="entry name" value="Plant_NBS-LRR"/>
</dbReference>
<dbReference type="InterPro" id="IPR036388">
    <property type="entry name" value="WH-like_DNA-bd_sf"/>
</dbReference>
<dbReference type="PANTHER" id="PTHR33463:SF220">
    <property type="entry name" value="NB-ARC DOMAIN-CONTAINING PROTEIN"/>
    <property type="match status" value="1"/>
</dbReference>
<dbReference type="PANTHER" id="PTHR33463">
    <property type="entry name" value="NB-ARC DOMAIN-CONTAINING PROTEIN-RELATED"/>
    <property type="match status" value="1"/>
</dbReference>
<dbReference type="Pfam" id="PF23598">
    <property type="entry name" value="LRR_14"/>
    <property type="match status" value="1"/>
</dbReference>
<dbReference type="Pfam" id="PF00931">
    <property type="entry name" value="NB-ARC"/>
    <property type="match status" value="1"/>
</dbReference>
<dbReference type="Pfam" id="PF23559">
    <property type="entry name" value="WH_DRP"/>
    <property type="match status" value="1"/>
</dbReference>
<dbReference type="PRINTS" id="PR00364">
    <property type="entry name" value="DISEASERSIST"/>
</dbReference>
<dbReference type="SUPFAM" id="SSF52058">
    <property type="entry name" value="L domain-like"/>
    <property type="match status" value="1"/>
</dbReference>
<dbReference type="SUPFAM" id="SSF52540">
    <property type="entry name" value="P-loop containing nucleoside triphosphate hydrolases"/>
    <property type="match status" value="1"/>
</dbReference>
<protein>
    <recommendedName>
        <fullName>Disease resistance protein RPS5</fullName>
    </recommendedName>
    <alternativeName>
        <fullName>Resistance to Pseudomonas syringae protein 5</fullName>
    </alternativeName>
    <alternativeName>
        <fullName>pNd3/pNd10</fullName>
    </alternativeName>
</protein>
<reference key="1">
    <citation type="journal article" date="1998" name="Plant Cell">
        <title>A mutation within the leucine-rich repeat domain of the Arabidopsis disease resistance gene RPS5 partially suppresses multiple bacterial and downy mildew resistance genes.</title>
        <authorList>
            <person name="Warren R.F."/>
            <person name="Henk A."/>
            <person name="Mowery P."/>
            <person name="Holub E."/>
            <person name="Innes R.W."/>
        </authorList>
    </citation>
    <scope>NUCLEOTIDE SEQUENCE [GENOMIC DNA]</scope>
    <scope>FUNCTION</scope>
    <scope>MUTANTS RPS5-1 AND RPS5-2</scope>
    <source>
        <strain>cv. Columbia</strain>
    </source>
</reference>
<reference key="2">
    <citation type="journal article" date="2000" name="Nature">
        <title>Sequence and analysis of chromosome 1 of the plant Arabidopsis thaliana.</title>
        <authorList>
            <person name="Theologis A."/>
            <person name="Ecker J.R."/>
            <person name="Palm C.J."/>
            <person name="Federspiel N.A."/>
            <person name="Kaul S."/>
            <person name="White O."/>
            <person name="Alonso J."/>
            <person name="Altafi H."/>
            <person name="Araujo R."/>
            <person name="Bowman C.L."/>
            <person name="Brooks S.Y."/>
            <person name="Buehler E."/>
            <person name="Chan A."/>
            <person name="Chao Q."/>
            <person name="Chen H."/>
            <person name="Cheuk R.F."/>
            <person name="Chin C.W."/>
            <person name="Chung M.K."/>
            <person name="Conn L."/>
            <person name="Conway A.B."/>
            <person name="Conway A.R."/>
            <person name="Creasy T.H."/>
            <person name="Dewar K."/>
            <person name="Dunn P."/>
            <person name="Etgu P."/>
            <person name="Feldblyum T.V."/>
            <person name="Feng J.-D."/>
            <person name="Fong B."/>
            <person name="Fujii C.Y."/>
            <person name="Gill J.E."/>
            <person name="Goldsmith A.D."/>
            <person name="Haas B."/>
            <person name="Hansen N.F."/>
            <person name="Hughes B."/>
            <person name="Huizar L."/>
            <person name="Hunter J.L."/>
            <person name="Jenkins J."/>
            <person name="Johnson-Hopson C."/>
            <person name="Khan S."/>
            <person name="Khaykin E."/>
            <person name="Kim C.J."/>
            <person name="Koo H.L."/>
            <person name="Kremenetskaia I."/>
            <person name="Kurtz D.B."/>
            <person name="Kwan A."/>
            <person name="Lam B."/>
            <person name="Langin-Hooper S."/>
            <person name="Lee A."/>
            <person name="Lee J.M."/>
            <person name="Lenz C.A."/>
            <person name="Li J.H."/>
            <person name="Li Y.-P."/>
            <person name="Lin X."/>
            <person name="Liu S.X."/>
            <person name="Liu Z.A."/>
            <person name="Luros J.S."/>
            <person name="Maiti R."/>
            <person name="Marziali A."/>
            <person name="Militscher J."/>
            <person name="Miranda M."/>
            <person name="Nguyen M."/>
            <person name="Nierman W.C."/>
            <person name="Osborne B.I."/>
            <person name="Pai G."/>
            <person name="Peterson J."/>
            <person name="Pham P.K."/>
            <person name="Rizzo M."/>
            <person name="Rooney T."/>
            <person name="Rowley D."/>
            <person name="Sakano H."/>
            <person name="Salzberg S.L."/>
            <person name="Schwartz J.R."/>
            <person name="Shinn P."/>
            <person name="Southwick A.M."/>
            <person name="Sun H."/>
            <person name="Tallon L.J."/>
            <person name="Tambunga G."/>
            <person name="Toriumi M.J."/>
            <person name="Town C.D."/>
            <person name="Utterback T."/>
            <person name="Van Aken S."/>
            <person name="Vaysberg M."/>
            <person name="Vysotskaia V.S."/>
            <person name="Walker M."/>
            <person name="Wu D."/>
            <person name="Yu G."/>
            <person name="Fraser C.M."/>
            <person name="Venter J.C."/>
            <person name="Davis R.W."/>
        </authorList>
    </citation>
    <scope>NUCLEOTIDE SEQUENCE [LARGE SCALE GENOMIC DNA]</scope>
    <source>
        <strain>cv. Columbia</strain>
    </source>
</reference>
<reference key="3">
    <citation type="journal article" date="2017" name="Plant J.">
        <title>Araport11: a complete reannotation of the Arabidopsis thaliana reference genome.</title>
        <authorList>
            <person name="Cheng C.Y."/>
            <person name="Krishnakumar V."/>
            <person name="Chan A.P."/>
            <person name="Thibaud-Nissen F."/>
            <person name="Schobel S."/>
            <person name="Town C.D."/>
        </authorList>
    </citation>
    <scope>GENOME REANNOTATION</scope>
    <source>
        <strain>cv. Columbia</strain>
    </source>
</reference>
<reference key="4">
    <citation type="submission" date="2003-09" db="EMBL/GenBank/DDBJ databases">
        <title>Arabidopsis ORF clones.</title>
        <authorList>
            <person name="Shinn P."/>
            <person name="Chen H."/>
            <person name="Cheuk R.F."/>
            <person name="Kim C.J."/>
            <person name="Carninci P."/>
            <person name="Hayashizaki Y."/>
            <person name="Ishida J."/>
            <person name="Kamiya A."/>
            <person name="Kawai J."/>
            <person name="Narusaka M."/>
            <person name="Sakurai T."/>
            <person name="Satou M."/>
            <person name="Seki M."/>
            <person name="Shinozaki K."/>
            <person name="Ecker J.R."/>
        </authorList>
    </citation>
    <scope>NUCLEOTIDE SEQUENCE [LARGE SCALE MRNA]</scope>
    <source>
        <strain>cv. Columbia</strain>
    </source>
</reference>
<reference key="5">
    <citation type="journal article" date="1998" name="Plant J.">
        <title>Disease resistance gene homologs correlate with disease resistance loci of Arabidopsis thaliana.</title>
        <authorList>
            <person name="Speulman E."/>
            <person name="Bouchez D."/>
            <person name="Holub E.B."/>
            <person name="Beynon J.L."/>
        </authorList>
    </citation>
    <scope>NUCLEOTIDE SEQUENCE [GENOMIC DNA] OF 185-355</scope>
    <source>
        <strain>cv. Nd-1</strain>
    </source>
</reference>
<reference key="6">
    <citation type="journal article" date="1998" name="Mol. Plant Microbe Interact.">
        <title>Identification of R-gene homologous DNA fragments genetically linked to disease resistance loci in Arabidopsis thaliana.</title>
        <authorList>
            <person name="Aarts M.G.M."/>
            <person name="te Lintel Hekkert B."/>
            <person name="Holub E.B."/>
            <person name="Beynon J.L."/>
            <person name="Stiekema W.J."/>
            <person name="Pereira A."/>
        </authorList>
    </citation>
    <scope>NUCLEOTIDE SEQUENCE [GENOMIC DNA] OF 192-347</scope>
    <source>
        <strain>cv. Columbia</strain>
    </source>
</reference>
<reference key="7">
    <citation type="journal article" date="2003" name="Science">
        <title>Cleavage of Arabidopsis PBS1 by a bacterial type III effector.</title>
        <authorList>
            <person name="Shao F."/>
            <person name="Golstein C."/>
            <person name="Ade J."/>
            <person name="Stoutemyer M."/>
            <person name="Dixon J.E."/>
            <person name="Innes R.W."/>
        </authorList>
    </citation>
    <scope>FUNCTION</scope>
</reference>
<reference key="8">
    <citation type="journal article" date="2007" name="Proc. Natl. Acad. Sci. U.S.A.">
        <title>Indirect activation of a plant nucleotide binding site-leucine-rich repeat protein by a bacterial protease.</title>
        <authorList>
            <person name="Ade J."/>
            <person name="DeYoung B.J."/>
            <person name="Golstein C."/>
            <person name="Innes R.W."/>
        </authorList>
    </citation>
    <scope>FUNCTION</scope>
    <scope>INTERACTION WITH PBS1</scope>
    <scope>SUBUNIT</scope>
    <scope>MUTAGENESIS OF LYS-189 AND ASP-266</scope>
</reference>
<reference key="9">
    <citation type="journal article" date="2012" name="Cell. Microbiol.">
        <title>Activation of a plant nucleotide binding-leucine rich repeat disease resistance protein by a modified self protein.</title>
        <authorList>
            <person name="DeYoung B.J."/>
            <person name="Qi D."/>
            <person name="Kim S.H."/>
            <person name="Burke T.P."/>
            <person name="Innes R.W."/>
        </authorList>
    </citation>
    <scope>FUNCTION</scope>
    <scope>INTERACTION WITH PBS1</scope>
</reference>
<reference key="10">
    <citation type="journal article" date="2012" name="Mol. Plant Microbe Interact.">
        <title>N-terminal motifs in some plant disease resistance proteins function in membrane attachment and contribute to disease resistance.</title>
        <authorList>
            <person name="Takemoto D."/>
            <person name="Rafiqi M."/>
            <person name="Hurley U."/>
            <person name="Lawrence G.J."/>
            <person name="Bernoux M."/>
            <person name="Hardham A.R."/>
            <person name="Ellis J.G."/>
            <person name="Dodds P.N."/>
            <person name="Jones D.A."/>
        </authorList>
    </citation>
    <scope>SUBCELLULAR LOCATION</scope>
    <scope>MYRISTOYLATION AT GLY-2</scope>
    <scope>PALMITOYLATION AT CYS-4</scope>
    <scope>MUTAGENESIS OF GLY-2; CYS-4 AND SER-6</scope>
</reference>
<reference key="11">
    <citation type="journal article" date="2012" name="Plant Physiol.">
        <title>Structure-function analysis of the coiled-coil and leucine-rich repeat domains of the RPS5 disease resistance protein.</title>
        <authorList>
            <person name="Qi D."/>
            <person name="DeYoung B.J."/>
            <person name="Innes R.W."/>
        </authorList>
    </citation>
    <scope>SUBCELLULAR LOCATION</scope>
    <scope>MUTAGENESIS OF 2-GLY-GLY-3 AND CYS-4</scope>
</reference>
<name>RPS5_ARATH</name>
<sequence>MGGCFSVSLPCDQVVSQFSQLLCVRGSYIHNLSKNLASLQKAMRMLKARQYDVIRRLETEEFTGRQQRLSQVQVWLTSVLIIQNQFNDLLRSNEVELQRLCLCGFCSKDLKLSYRYGKRVIMMLKEVESLSSQGFFDVVSEATPFADVDEIPFQPTIVGQEIMLEKAWNRLMEDGSGILGLYGMGGVGKTTLLTKINNKFSKIDDRFDVVIWVVVSRSSTVRKIQRDIAEKVGLGGMEWSEKNDNQIAVDIHNVLRRRKFVLLLDDIWEKVNLKAVGVPYPSKDNGCKVAFTTRSRDVCGRMGVDDPMEVSCLQPEESWDLFQMKVGKNTLGSHPDIPGLARKVARKCRGLPLALNVIGEAMACKRTVHEWCHAIDVLTSSAIDFSGMEDEILHVLKYSYDNLNGELMKSCFLYCSLFPEDYLIDKEGLVDYWISEGFINEKEGRERNINQGYEIIGTLVRACLLLEEERNKSNVKMHDVVREMALWISSDLGKQKEKCIVRAGVGLREVPKVKDWNTVRKISLMNNEIEEIFDSHECAALTTLFLQKNDVVKISAEFFRCMPHLVVLDLSENQSLNELPEEISELASLRYFNLSYTCIHQLPVGLWTLKKLIHLNLEHMSSLGSILGISNLWNLRTLGLRDSRLLLDMSLVKELQLLEHLEVITLDISSSLVAEPLLCSQRLVECIKEVDFKYLKEESVRVLTLPTMGNLRKLGIKRCGMREIKIERTTSSSSRNKSPTTPCFSNLSRVFIAKCHGLKDLTWLLFAPNLTFLEVGFSKEVEDIISEEKAEEHSATIVPFRKLETLHLFELRGLKRIYAKALHFPCLKVIHVEKCEKLRKLPLDSKSGIAGEELVIYYGEREWIERVEWEDQATQLRFLPSSRWRWRET</sequence>
<keyword id="KW-0067">ATP-binding</keyword>
<keyword id="KW-1003">Cell membrane</keyword>
<keyword id="KW-0175">Coiled coil</keyword>
<keyword id="KW-0381">Hypersensitive response</keyword>
<keyword id="KW-0433">Leucine-rich repeat</keyword>
<keyword id="KW-0449">Lipoprotein</keyword>
<keyword id="KW-0472">Membrane</keyword>
<keyword id="KW-0519">Myristate</keyword>
<keyword id="KW-0547">Nucleotide-binding</keyword>
<keyword id="KW-0564">Palmitate</keyword>
<keyword id="KW-0611">Plant defense</keyword>
<keyword id="KW-1185">Reference proteome</keyword>
<keyword id="KW-0677">Repeat</keyword>
<evidence type="ECO:0000250" key="1"/>
<evidence type="ECO:0000255" key="2"/>
<evidence type="ECO:0000269" key="3">
    <source>
    </source>
</evidence>
<evidence type="ECO:0000269" key="4">
    <source>
    </source>
</evidence>
<evidence type="ECO:0000269" key="5">
    <source>
    </source>
</evidence>
<evidence type="ECO:0000269" key="6">
    <source>
    </source>
</evidence>
<evidence type="ECO:0000269" key="7">
    <source>
    </source>
</evidence>
<evidence type="ECO:0000269" key="8">
    <source>
    </source>
</evidence>
<evidence type="ECO:0000303" key="9">
    <source>
    </source>
</evidence>
<evidence type="ECO:0000305" key="10"/>
<organism>
    <name type="scientific">Arabidopsis thaliana</name>
    <name type="common">Mouse-ear cress</name>
    <dbReference type="NCBI Taxonomy" id="3702"/>
    <lineage>
        <taxon>Eukaryota</taxon>
        <taxon>Viridiplantae</taxon>
        <taxon>Streptophyta</taxon>
        <taxon>Embryophyta</taxon>
        <taxon>Tracheophyta</taxon>
        <taxon>Spermatophyta</taxon>
        <taxon>Magnoliopsida</taxon>
        <taxon>eudicotyledons</taxon>
        <taxon>Gunneridae</taxon>
        <taxon>Pentapetalae</taxon>
        <taxon>rosids</taxon>
        <taxon>malvids</taxon>
        <taxon>Brassicales</taxon>
        <taxon>Brassicaceae</taxon>
        <taxon>Camelineae</taxon>
        <taxon>Arabidopsis</taxon>
    </lineage>
</organism>